<feature type="chain" id="PRO_0000088949" description="Actin">
    <location>
        <begin position="1"/>
        <end position="375"/>
    </location>
</feature>
<protein>
    <recommendedName>
        <fullName>Actin</fullName>
        <ecNumber evidence="1">3.6.4.-</ecNumber>
    </recommendedName>
</protein>
<comment type="function">
    <text>Actins are highly conserved proteins that are involved in various types of cell motility and are ubiquitously expressed in all eukaryotic cells.</text>
</comment>
<comment type="catalytic activity">
    <reaction evidence="1">
        <text>ATP + H2O = ADP + phosphate + H(+)</text>
        <dbReference type="Rhea" id="RHEA:13065"/>
        <dbReference type="ChEBI" id="CHEBI:15377"/>
        <dbReference type="ChEBI" id="CHEBI:15378"/>
        <dbReference type="ChEBI" id="CHEBI:30616"/>
        <dbReference type="ChEBI" id="CHEBI:43474"/>
        <dbReference type="ChEBI" id="CHEBI:456216"/>
    </reaction>
</comment>
<comment type="subcellular location">
    <subcellularLocation>
        <location>Cytoplasm</location>
        <location>Cytoskeleton</location>
    </subcellularLocation>
</comment>
<comment type="similarity">
    <text evidence="2">Belongs to the actin family.</text>
</comment>
<organism>
    <name type="scientific">Sterkiella cavicola</name>
    <name type="common">Ciliate</name>
    <name type="synonym">Histriculus cavicola</name>
    <dbReference type="NCBI Taxonomy" id="742176"/>
    <lineage>
        <taxon>Eukaryota</taxon>
        <taxon>Sar</taxon>
        <taxon>Alveolata</taxon>
        <taxon>Ciliophora</taxon>
        <taxon>Intramacronucleata</taxon>
        <taxon>Spirotrichea</taxon>
        <taxon>Stichotrichia</taxon>
        <taxon>Sporadotrichida</taxon>
        <taxon>Oxytrichidae</taxon>
        <taxon>Stylonychinae</taxon>
        <taxon>Sterkiella</taxon>
    </lineage>
</organism>
<accession>O00937</accession>
<sequence>MSEQQTCVIDNGSGVVKAGFSGEDAPRAVYPSIVGRPKNVSALIGVDSASEYLGDEAQQKRGVLKIFYPIEHGIVKDWDDMEKIWNHTFYVELRVSPDEHPVLLTEAPLNPKVNREKMTQIMFETFNVPALYVAIQAVLSLYSAGRTTGIVCDAGDGVTHTVPIYEGFSIPHAVSRIQLAGRDLTTFMAKLLTERGYSFTSSAELEIVRDIKEKLCFVALDYEAALKQSHDSSTFEKNYELPDGKIITIGSERFRCPEYLFKPLEMNGKELDSIQDLTYKSIQECDVDVRRDLYQTIILSGGSTSIEGIGERLLKEIENRAPKSINVKVIASPDRRFAVWRGGSTLTSLSTFASMWITKEDYDENGASIVHRKCI</sequence>
<proteinExistence type="inferred from homology"/>
<dbReference type="EC" id="3.6.4.-" evidence="1"/>
<dbReference type="EMBL" id="Y12047">
    <property type="protein sequence ID" value="CAA72778.1"/>
    <property type="molecule type" value="Genomic_DNA"/>
</dbReference>
<dbReference type="SMR" id="O00937"/>
<dbReference type="GO" id="GO:0005737">
    <property type="term" value="C:cytoplasm"/>
    <property type="evidence" value="ECO:0007669"/>
    <property type="project" value="UniProtKB-KW"/>
</dbReference>
<dbReference type="GO" id="GO:0005856">
    <property type="term" value="C:cytoskeleton"/>
    <property type="evidence" value="ECO:0007669"/>
    <property type="project" value="UniProtKB-SubCell"/>
</dbReference>
<dbReference type="GO" id="GO:0005524">
    <property type="term" value="F:ATP binding"/>
    <property type="evidence" value="ECO:0007669"/>
    <property type="project" value="UniProtKB-KW"/>
</dbReference>
<dbReference type="GO" id="GO:0016787">
    <property type="term" value="F:hydrolase activity"/>
    <property type="evidence" value="ECO:0007669"/>
    <property type="project" value="UniProtKB-KW"/>
</dbReference>
<dbReference type="FunFam" id="3.30.420.40:FF:000291">
    <property type="entry name" value="Actin, alpha skeletal muscle"/>
    <property type="match status" value="1"/>
</dbReference>
<dbReference type="FunFam" id="3.90.640.10:FF:000047">
    <property type="entry name" value="Actin, alpha skeletal muscle"/>
    <property type="match status" value="1"/>
</dbReference>
<dbReference type="FunFam" id="3.30.420.40:FF:000058">
    <property type="entry name" value="Putative actin-related protein 5"/>
    <property type="match status" value="1"/>
</dbReference>
<dbReference type="Gene3D" id="3.30.420.40">
    <property type="match status" value="2"/>
</dbReference>
<dbReference type="Gene3D" id="3.90.640.10">
    <property type="entry name" value="Actin, Chain A, domain 4"/>
    <property type="match status" value="1"/>
</dbReference>
<dbReference type="InterPro" id="IPR004000">
    <property type="entry name" value="Actin"/>
</dbReference>
<dbReference type="InterPro" id="IPR020902">
    <property type="entry name" value="Actin/actin-like_CS"/>
</dbReference>
<dbReference type="InterPro" id="IPR004001">
    <property type="entry name" value="Actin_CS"/>
</dbReference>
<dbReference type="InterPro" id="IPR043129">
    <property type="entry name" value="ATPase_NBD"/>
</dbReference>
<dbReference type="PANTHER" id="PTHR11937">
    <property type="entry name" value="ACTIN"/>
    <property type="match status" value="1"/>
</dbReference>
<dbReference type="Pfam" id="PF00022">
    <property type="entry name" value="Actin"/>
    <property type="match status" value="1"/>
</dbReference>
<dbReference type="PRINTS" id="PR00190">
    <property type="entry name" value="ACTIN"/>
</dbReference>
<dbReference type="SMART" id="SM00268">
    <property type="entry name" value="ACTIN"/>
    <property type="match status" value="1"/>
</dbReference>
<dbReference type="SUPFAM" id="SSF53067">
    <property type="entry name" value="Actin-like ATPase domain"/>
    <property type="match status" value="2"/>
</dbReference>
<dbReference type="PROSITE" id="PS00406">
    <property type="entry name" value="ACTINS_1"/>
    <property type="match status" value="1"/>
</dbReference>
<dbReference type="PROSITE" id="PS00432">
    <property type="entry name" value="ACTINS_2"/>
    <property type="match status" value="1"/>
</dbReference>
<dbReference type="PROSITE" id="PS01132">
    <property type="entry name" value="ACTINS_ACT_LIKE"/>
    <property type="match status" value="1"/>
</dbReference>
<reference key="1">
    <citation type="journal article" date="1999" name="J. Eukaryot. Microbiol.">
        <title>Actin of Histriculus cavicola: characteristics of the highly divergent hypotrich ciliate actins.</title>
        <authorList>
            <person name="Perez-Romero P."/>
            <person name="Villalobo E."/>
            <person name="Diaz-Ramos C."/>
            <person name="Calvo P."/>
            <person name="Torres A."/>
        </authorList>
    </citation>
    <scope>NUCLEOTIDE SEQUENCE [GENOMIC DNA]</scope>
</reference>
<evidence type="ECO:0000250" key="1">
    <source>
        <dbReference type="UniProtKB" id="P68137"/>
    </source>
</evidence>
<evidence type="ECO:0000305" key="2"/>
<keyword id="KW-0067">ATP-binding</keyword>
<keyword id="KW-0963">Cytoplasm</keyword>
<keyword id="KW-0206">Cytoskeleton</keyword>
<keyword id="KW-0378">Hydrolase</keyword>
<keyword id="KW-0547">Nucleotide-binding</keyword>
<name>ACT_STECV</name>